<name>RS12_LEIXX</name>
<protein>
    <recommendedName>
        <fullName evidence="1">Small ribosomal subunit protein uS12</fullName>
    </recommendedName>
    <alternativeName>
        <fullName evidence="3">30S ribosomal protein S12</fullName>
    </alternativeName>
</protein>
<organism>
    <name type="scientific">Leifsonia xyli subsp. xyli (strain CTCB07)</name>
    <dbReference type="NCBI Taxonomy" id="281090"/>
    <lineage>
        <taxon>Bacteria</taxon>
        <taxon>Bacillati</taxon>
        <taxon>Actinomycetota</taxon>
        <taxon>Actinomycetes</taxon>
        <taxon>Micrococcales</taxon>
        <taxon>Microbacteriaceae</taxon>
        <taxon>Leifsonia</taxon>
    </lineage>
</organism>
<accession>Q6ACY7</accession>
<dbReference type="EMBL" id="AE016822">
    <property type="protein sequence ID" value="AAT89757.1"/>
    <property type="molecule type" value="Genomic_DNA"/>
</dbReference>
<dbReference type="RefSeq" id="WP_011186743.1">
    <property type="nucleotide sequence ID" value="NC_006087.1"/>
</dbReference>
<dbReference type="SMR" id="Q6ACY7"/>
<dbReference type="STRING" id="281090.Lxx20420"/>
<dbReference type="GeneID" id="49819123"/>
<dbReference type="KEGG" id="lxx:Lxx20420"/>
<dbReference type="eggNOG" id="COG0048">
    <property type="taxonomic scope" value="Bacteria"/>
</dbReference>
<dbReference type="HOGENOM" id="CLU_104295_1_2_11"/>
<dbReference type="Proteomes" id="UP000001306">
    <property type="component" value="Chromosome"/>
</dbReference>
<dbReference type="GO" id="GO:0015935">
    <property type="term" value="C:small ribosomal subunit"/>
    <property type="evidence" value="ECO:0007669"/>
    <property type="project" value="InterPro"/>
</dbReference>
<dbReference type="GO" id="GO:0019843">
    <property type="term" value="F:rRNA binding"/>
    <property type="evidence" value="ECO:0007669"/>
    <property type="project" value="UniProtKB-UniRule"/>
</dbReference>
<dbReference type="GO" id="GO:0003735">
    <property type="term" value="F:structural constituent of ribosome"/>
    <property type="evidence" value="ECO:0007669"/>
    <property type="project" value="InterPro"/>
</dbReference>
<dbReference type="GO" id="GO:0000049">
    <property type="term" value="F:tRNA binding"/>
    <property type="evidence" value="ECO:0007669"/>
    <property type="project" value="UniProtKB-UniRule"/>
</dbReference>
<dbReference type="GO" id="GO:0006412">
    <property type="term" value="P:translation"/>
    <property type="evidence" value="ECO:0007669"/>
    <property type="project" value="UniProtKB-UniRule"/>
</dbReference>
<dbReference type="CDD" id="cd03368">
    <property type="entry name" value="Ribosomal_S12"/>
    <property type="match status" value="1"/>
</dbReference>
<dbReference type="FunFam" id="2.40.50.140:FF:000001">
    <property type="entry name" value="30S ribosomal protein S12"/>
    <property type="match status" value="1"/>
</dbReference>
<dbReference type="Gene3D" id="2.40.50.140">
    <property type="entry name" value="Nucleic acid-binding proteins"/>
    <property type="match status" value="1"/>
</dbReference>
<dbReference type="HAMAP" id="MF_00403_B">
    <property type="entry name" value="Ribosomal_uS12_B"/>
    <property type="match status" value="1"/>
</dbReference>
<dbReference type="InterPro" id="IPR012340">
    <property type="entry name" value="NA-bd_OB-fold"/>
</dbReference>
<dbReference type="InterPro" id="IPR006032">
    <property type="entry name" value="Ribosomal_uS12"/>
</dbReference>
<dbReference type="InterPro" id="IPR005679">
    <property type="entry name" value="Ribosomal_uS12_bac"/>
</dbReference>
<dbReference type="NCBIfam" id="TIGR00981">
    <property type="entry name" value="rpsL_bact"/>
    <property type="match status" value="1"/>
</dbReference>
<dbReference type="PANTHER" id="PTHR11652">
    <property type="entry name" value="30S RIBOSOMAL PROTEIN S12 FAMILY MEMBER"/>
    <property type="match status" value="1"/>
</dbReference>
<dbReference type="Pfam" id="PF00164">
    <property type="entry name" value="Ribosom_S12_S23"/>
    <property type="match status" value="1"/>
</dbReference>
<dbReference type="PIRSF" id="PIRSF002133">
    <property type="entry name" value="Ribosomal_S12/S23"/>
    <property type="match status" value="1"/>
</dbReference>
<dbReference type="PRINTS" id="PR01034">
    <property type="entry name" value="RIBOSOMALS12"/>
</dbReference>
<dbReference type="SUPFAM" id="SSF50249">
    <property type="entry name" value="Nucleic acid-binding proteins"/>
    <property type="match status" value="1"/>
</dbReference>
<dbReference type="PROSITE" id="PS00055">
    <property type="entry name" value="RIBOSOMAL_S12"/>
    <property type="match status" value="1"/>
</dbReference>
<sequence>MPTIQQLVRKGRTPKVTKTKAPALKANPQQRGVCTRVYTTTPKKPNSALRKVARVKLSNGTEVTAYIPGEGHNLQEHSMVLVRGGRVKDLPGVRYKIVRGALDTQAVKNRKQARSRYGAKMEKK</sequence>
<proteinExistence type="inferred from homology"/>
<reference key="1">
    <citation type="journal article" date="2004" name="Mol. Plant Microbe Interact.">
        <title>The genome sequence of the Gram-positive sugarcane pathogen Leifsonia xyli subsp. xyli.</title>
        <authorList>
            <person name="Monteiro-Vitorello C.B."/>
            <person name="Camargo L.E.A."/>
            <person name="Van Sluys M.A."/>
            <person name="Kitajima J.P."/>
            <person name="Truffi D."/>
            <person name="do Amaral A.M."/>
            <person name="Harakava R."/>
            <person name="de Oliveira J.C.F."/>
            <person name="Wood D."/>
            <person name="de Oliveira M.C."/>
            <person name="Miyaki C.Y."/>
            <person name="Takita M.A."/>
            <person name="da Silva A.C.R."/>
            <person name="Furlan L.R."/>
            <person name="Carraro D.M."/>
            <person name="Camarotte G."/>
            <person name="Almeida N.F. Jr."/>
            <person name="Carrer H."/>
            <person name="Coutinho L.L."/>
            <person name="El-Dorry H.A."/>
            <person name="Ferro M.I.T."/>
            <person name="Gagliardi P.R."/>
            <person name="Giglioti E."/>
            <person name="Goldman M.H.S."/>
            <person name="Goldman G.H."/>
            <person name="Kimura E.T."/>
            <person name="Ferro E.S."/>
            <person name="Kuramae E.E."/>
            <person name="Lemos E.G.M."/>
            <person name="Lemos M.V.F."/>
            <person name="Mauro S.M.Z."/>
            <person name="Machado M.A."/>
            <person name="Marino C.L."/>
            <person name="Menck C.F."/>
            <person name="Nunes L.R."/>
            <person name="Oliveira R.C."/>
            <person name="Pereira G.G."/>
            <person name="Siqueira W."/>
            <person name="de Souza A.A."/>
            <person name="Tsai S.M."/>
            <person name="Zanca A.S."/>
            <person name="Simpson A.J.G."/>
            <person name="Brumbley S.M."/>
            <person name="Setubal J.C."/>
        </authorList>
    </citation>
    <scope>NUCLEOTIDE SEQUENCE [LARGE SCALE GENOMIC DNA]</scope>
    <source>
        <strain>CTCB07</strain>
    </source>
</reference>
<comment type="function">
    <text evidence="1">With S4 and S5 plays an important role in translational accuracy.</text>
</comment>
<comment type="function">
    <text evidence="1">Interacts with and stabilizes bases of the 16S rRNA that are involved in tRNA selection in the A site and with the mRNA backbone. Located at the interface of the 30S and 50S subunits, it traverses the body of the 30S subunit contacting proteins on the other side and probably holding the rRNA structure together. The combined cluster of proteins S8, S12 and S17 appears to hold together the shoulder and platform of the 30S subunit.</text>
</comment>
<comment type="subunit">
    <text evidence="1">Part of the 30S ribosomal subunit. Contacts proteins S8 and S17. May interact with IF1 in the 30S initiation complex.</text>
</comment>
<comment type="similarity">
    <text evidence="1">Belongs to the universal ribosomal protein uS12 family.</text>
</comment>
<comment type="caution">
    <text evidence="3">Because the enzyme that would modify Asp-89 to 3-methylthioaspartic acid has not been found in the proteome of this organism, that modification is not predicted.</text>
</comment>
<feature type="chain" id="PRO_0000146244" description="Small ribosomal subunit protein uS12">
    <location>
        <begin position="1"/>
        <end position="124"/>
    </location>
</feature>
<feature type="region of interest" description="Disordered" evidence="2">
    <location>
        <begin position="1"/>
        <end position="30"/>
    </location>
</feature>
<feature type="compositionally biased region" description="Basic residues" evidence="2">
    <location>
        <begin position="9"/>
        <end position="18"/>
    </location>
</feature>
<keyword id="KW-1185">Reference proteome</keyword>
<keyword id="KW-0687">Ribonucleoprotein</keyword>
<keyword id="KW-0689">Ribosomal protein</keyword>
<keyword id="KW-0694">RNA-binding</keyword>
<keyword id="KW-0699">rRNA-binding</keyword>
<keyword id="KW-0820">tRNA-binding</keyword>
<gene>
    <name evidence="1" type="primary">rpsL</name>
    <name type="ordered locus">Lxx20420</name>
</gene>
<evidence type="ECO:0000255" key="1">
    <source>
        <dbReference type="HAMAP-Rule" id="MF_00403"/>
    </source>
</evidence>
<evidence type="ECO:0000256" key="2">
    <source>
        <dbReference type="SAM" id="MobiDB-lite"/>
    </source>
</evidence>
<evidence type="ECO:0000305" key="3"/>